<protein>
    <recommendedName>
        <fullName evidence="1">Argininosuccinate lyase</fullName>
        <shortName evidence="1">ASAL</shortName>
        <ecNumber evidence="1">4.3.2.1</ecNumber>
    </recommendedName>
    <alternativeName>
        <fullName evidence="1">Arginosuccinase</fullName>
    </alternativeName>
</protein>
<accession>B1YB49</accession>
<gene>
    <name evidence="1" type="primary">argH</name>
    <name type="ordered locus">Tneu_1832</name>
</gene>
<organism>
    <name type="scientific">Pyrobaculum neutrophilum (strain DSM 2338 / JCM 9278 / NBRC 100436 / V24Sta)</name>
    <name type="common">Thermoproteus neutrophilus</name>
    <dbReference type="NCBI Taxonomy" id="444157"/>
    <lineage>
        <taxon>Archaea</taxon>
        <taxon>Thermoproteota</taxon>
        <taxon>Thermoprotei</taxon>
        <taxon>Thermoproteales</taxon>
        <taxon>Thermoproteaceae</taxon>
        <taxon>Pyrobaculum</taxon>
    </lineage>
</organism>
<feature type="chain" id="PRO_1000089124" description="Argininosuccinate lyase">
    <location>
        <begin position="1"/>
        <end position="429"/>
    </location>
</feature>
<proteinExistence type="inferred from homology"/>
<comment type="catalytic activity">
    <reaction evidence="1">
        <text>2-(N(omega)-L-arginino)succinate = fumarate + L-arginine</text>
        <dbReference type="Rhea" id="RHEA:24020"/>
        <dbReference type="ChEBI" id="CHEBI:29806"/>
        <dbReference type="ChEBI" id="CHEBI:32682"/>
        <dbReference type="ChEBI" id="CHEBI:57472"/>
        <dbReference type="EC" id="4.3.2.1"/>
    </reaction>
</comment>
<comment type="pathway">
    <text evidence="1">Amino-acid biosynthesis; L-arginine biosynthesis; L-arginine from L-ornithine and carbamoyl phosphate: step 3/3.</text>
</comment>
<comment type="subcellular location">
    <subcellularLocation>
        <location evidence="1">Cytoplasm</location>
    </subcellularLocation>
</comment>
<comment type="similarity">
    <text evidence="1">Belongs to the lyase 1 family. Argininosuccinate lyase subfamily.</text>
</comment>
<keyword id="KW-0028">Amino-acid biosynthesis</keyword>
<keyword id="KW-0055">Arginine biosynthesis</keyword>
<keyword id="KW-0963">Cytoplasm</keyword>
<keyword id="KW-0456">Lyase</keyword>
<evidence type="ECO:0000255" key="1">
    <source>
        <dbReference type="HAMAP-Rule" id="MF_00006"/>
    </source>
</evidence>
<reference key="1">
    <citation type="submission" date="2008-03" db="EMBL/GenBank/DDBJ databases">
        <title>Complete sequence of Thermoproteus neutrophilus V24Sta.</title>
        <authorList>
            <consortium name="US DOE Joint Genome Institute"/>
            <person name="Copeland A."/>
            <person name="Lucas S."/>
            <person name="Lapidus A."/>
            <person name="Glavina del Rio T."/>
            <person name="Dalin E."/>
            <person name="Tice H."/>
            <person name="Bruce D."/>
            <person name="Goodwin L."/>
            <person name="Pitluck S."/>
            <person name="Sims D."/>
            <person name="Brettin T."/>
            <person name="Detter J.C."/>
            <person name="Han C."/>
            <person name="Kuske C.R."/>
            <person name="Schmutz J."/>
            <person name="Larimer F."/>
            <person name="Land M."/>
            <person name="Hauser L."/>
            <person name="Kyrpides N."/>
            <person name="Mikhailova N."/>
            <person name="Biddle J.F."/>
            <person name="Zhang Z."/>
            <person name="Fitz-Gibbon S.T."/>
            <person name="Lowe T.M."/>
            <person name="Saltikov C."/>
            <person name="House C.H."/>
            <person name="Richardson P."/>
        </authorList>
    </citation>
    <scope>NUCLEOTIDE SEQUENCE [LARGE SCALE GENOMIC DNA]</scope>
    <source>
        <strain>DSM 2338 / JCM 9278 / NBRC 100436 / V24Sta</strain>
    </source>
</reference>
<dbReference type="EC" id="4.3.2.1" evidence="1"/>
<dbReference type="EMBL" id="CP001014">
    <property type="protein sequence ID" value="ACB40749.1"/>
    <property type="molecule type" value="Genomic_DNA"/>
</dbReference>
<dbReference type="RefSeq" id="WP_012351168.1">
    <property type="nucleotide sequence ID" value="NC_010525.1"/>
</dbReference>
<dbReference type="SMR" id="B1YB49"/>
<dbReference type="STRING" id="444157.Tneu_1832"/>
<dbReference type="GeneID" id="6165243"/>
<dbReference type="KEGG" id="tne:Tneu_1832"/>
<dbReference type="eggNOG" id="arCOG01748">
    <property type="taxonomic scope" value="Archaea"/>
</dbReference>
<dbReference type="HOGENOM" id="CLU_027272_2_0_2"/>
<dbReference type="OrthoDB" id="27337at2157"/>
<dbReference type="UniPathway" id="UPA00068">
    <property type="reaction ID" value="UER00114"/>
</dbReference>
<dbReference type="Proteomes" id="UP000001694">
    <property type="component" value="Chromosome"/>
</dbReference>
<dbReference type="GO" id="GO:0005829">
    <property type="term" value="C:cytosol"/>
    <property type="evidence" value="ECO:0007669"/>
    <property type="project" value="TreeGrafter"/>
</dbReference>
<dbReference type="GO" id="GO:0004056">
    <property type="term" value="F:argininosuccinate lyase activity"/>
    <property type="evidence" value="ECO:0007669"/>
    <property type="project" value="UniProtKB-UniRule"/>
</dbReference>
<dbReference type="GO" id="GO:0042450">
    <property type="term" value="P:arginine biosynthetic process via ornithine"/>
    <property type="evidence" value="ECO:0007669"/>
    <property type="project" value="InterPro"/>
</dbReference>
<dbReference type="GO" id="GO:0006526">
    <property type="term" value="P:L-arginine biosynthetic process"/>
    <property type="evidence" value="ECO:0007669"/>
    <property type="project" value="UniProtKB-UniRule"/>
</dbReference>
<dbReference type="Gene3D" id="1.10.40.30">
    <property type="entry name" value="Fumarase/aspartase (C-terminal domain)"/>
    <property type="match status" value="1"/>
</dbReference>
<dbReference type="Gene3D" id="1.20.200.10">
    <property type="entry name" value="Fumarase/aspartase (Central domain)"/>
    <property type="match status" value="1"/>
</dbReference>
<dbReference type="Gene3D" id="1.10.275.10">
    <property type="entry name" value="Fumarase/aspartase (N-terminal domain)"/>
    <property type="match status" value="1"/>
</dbReference>
<dbReference type="HAMAP" id="MF_00006">
    <property type="entry name" value="Arg_succ_lyase"/>
    <property type="match status" value="1"/>
</dbReference>
<dbReference type="InterPro" id="IPR009049">
    <property type="entry name" value="Argininosuccinate_lyase"/>
</dbReference>
<dbReference type="InterPro" id="IPR024083">
    <property type="entry name" value="Fumarase/histidase_N"/>
</dbReference>
<dbReference type="InterPro" id="IPR000362">
    <property type="entry name" value="Fumarate_lyase_fam"/>
</dbReference>
<dbReference type="InterPro" id="IPR022761">
    <property type="entry name" value="Fumarate_lyase_N"/>
</dbReference>
<dbReference type="InterPro" id="IPR008948">
    <property type="entry name" value="L-Aspartase-like"/>
</dbReference>
<dbReference type="PANTHER" id="PTHR43814">
    <property type="entry name" value="ARGININOSUCCINATE LYASE"/>
    <property type="match status" value="1"/>
</dbReference>
<dbReference type="PANTHER" id="PTHR43814:SF1">
    <property type="entry name" value="ARGININOSUCCINATE LYASE"/>
    <property type="match status" value="1"/>
</dbReference>
<dbReference type="Pfam" id="PF00206">
    <property type="entry name" value="Lyase_1"/>
    <property type="match status" value="1"/>
</dbReference>
<dbReference type="PRINTS" id="PR00145">
    <property type="entry name" value="ARGSUCLYASE"/>
</dbReference>
<dbReference type="PRINTS" id="PR00149">
    <property type="entry name" value="FUMRATELYASE"/>
</dbReference>
<dbReference type="SUPFAM" id="SSF48557">
    <property type="entry name" value="L-aspartase-like"/>
    <property type="match status" value="1"/>
</dbReference>
<sequence length="429" mass="47388">MSFYRSWIGGEGELVRRYTSSIRDDAEIVEEVVKIMEAHVRHLAEVGAAPKEAAEAVAKALREVEPERLLTSEFEDVHEALEKWLVDRLGEEVAGWIGLGRSRNDHVAAAIRLAALRKTGVLKKAVERMRCVLAKRALEYADCAMPSFTHFQPAQAITFGHYLLAVDELAGEFLHVLKPVEELLKRSPLGAGPAGGARAPIDRERVAKLAGFEGVVENALYASGSRFFALALASAVVSFLVELSRAVDDFIRWNSPLVGYVAAPDSHVSTSSIMPHKRNLVTLEVFRARAAEALGHLAALHAVVMKIGMGYSLDLQEATRHLWAVLNIASEGVEVFTDFLEKMSFDCGRARRDAERYYSTSSDTAEEAALRGVPFRRAYFQLAREIREGAARLLPVDEALRRPTRGSANPEEVKRAASARLVFCREKPL</sequence>
<name>ARLY_PYRNV</name>